<organism>
    <name type="scientific">Conus victoriae</name>
    <name type="common">Queen Victoria cone</name>
    <dbReference type="NCBI Taxonomy" id="319920"/>
    <lineage>
        <taxon>Eukaryota</taxon>
        <taxon>Metazoa</taxon>
        <taxon>Spiralia</taxon>
        <taxon>Lophotrochozoa</taxon>
        <taxon>Mollusca</taxon>
        <taxon>Gastropoda</taxon>
        <taxon>Caenogastropoda</taxon>
        <taxon>Neogastropoda</taxon>
        <taxon>Conoidea</taxon>
        <taxon>Conidae</taxon>
        <taxon>Conus</taxon>
        <taxon>Cylinder</taxon>
    </lineage>
</organism>
<evidence type="ECO:0000255" key="1"/>
<evidence type="ECO:0000303" key="2">
    <source>
    </source>
</evidence>
<evidence type="ECO:0000305" key="3"/>
<evidence type="ECO:0000305" key="4">
    <source>
    </source>
</evidence>
<keyword id="KW-1015">Disulfide bond</keyword>
<keyword id="KW-0964">Secreted</keyword>
<keyword id="KW-0732">Signal</keyword>
<keyword id="KW-0800">Toxin</keyword>
<accession>W4VS70</accession>
<protein>
    <recommendedName>
        <fullName evidence="3">Conotoxin Vc22.1</fullName>
    </recommendedName>
    <alternativeName>
        <fullName evidence="2">E_Vc1</fullName>
    </alternativeName>
</protein>
<reference key="1">
    <citation type="journal article" date="2014" name="PLoS ONE">
        <title>Diversity of conotoxin gene superfamilies in the venomous snail, Conus victoriae.</title>
        <authorList>
            <person name="Robinson S.D."/>
            <person name="Safavi-Hemami H."/>
            <person name="McIntosh L.D."/>
            <person name="Purcell A.W."/>
            <person name="Norton R.S."/>
            <person name="Papenfuss A.T."/>
        </authorList>
    </citation>
    <scope>NUCLEOTIDE SEQUENCE [MRNA]</scope>
    <source>
        <tissue>Venom gland</tissue>
    </source>
</reference>
<comment type="subcellular location">
    <subcellularLocation>
        <location evidence="4">Secreted</location>
    </subcellularLocation>
</comment>
<comment type="tissue specificity">
    <text evidence="4">Expressed by the venom duct.</text>
</comment>
<comment type="domain">
    <text evidence="3">The cysteine framework is XXII (C-C-C-C-C-C-C-C).</text>
</comment>
<comment type="PTM">
    <text evidence="3">Contains 4 disulfide bonds.</text>
</comment>
<comment type="similarity">
    <text evidence="3">Belongs to the E superfamily.</text>
</comment>
<proteinExistence type="inferred from homology"/>
<feature type="signal peptide" evidence="1">
    <location>
        <begin position="1"/>
        <end position="18"/>
    </location>
</feature>
<feature type="chain" id="PRO_5004850809" description="Conotoxin Vc22.1" evidence="3">
    <location>
        <begin position="19"/>
        <end position="90"/>
    </location>
</feature>
<dbReference type="EMBL" id="GAIH01000007">
    <property type="protein sequence ID" value="JAB84710.1"/>
    <property type="molecule type" value="mRNA"/>
</dbReference>
<dbReference type="TCDB" id="8.B.1.4.3">
    <property type="family name" value="the long (4c-c) scorpion toxin (l-st) superfamily"/>
</dbReference>
<dbReference type="GO" id="GO:0005576">
    <property type="term" value="C:extracellular region"/>
    <property type="evidence" value="ECO:0007669"/>
    <property type="project" value="UniProtKB-SubCell"/>
</dbReference>
<dbReference type="GO" id="GO:0090729">
    <property type="term" value="F:toxin activity"/>
    <property type="evidence" value="ECO:0007669"/>
    <property type="project" value="UniProtKB-KW"/>
</dbReference>
<name>EM1_CONVC</name>
<sequence length="90" mass="10551">MMTRVFLAMFFLLVLTKGWPRLYDGDCTRGPNMHITCFKDQSCGLIVKRNGRLSCTLNCKCRRNESCLPSEEVDWDNRNMKIVICPKPWF</sequence>